<proteinExistence type="inferred from homology"/>
<comment type="function">
    <text evidence="1">Catalyzes the phosphorolysis of diverse nucleosides, yielding D-ribose 1-phosphate and the respective free bases. Can use uridine, adenosine, guanosine, cytidine, thymidine, inosine and xanthosine as substrates. Also catalyzes the reverse reactions.</text>
</comment>
<comment type="catalytic activity">
    <reaction evidence="1">
        <text>a purine D-ribonucleoside + phosphate = a purine nucleobase + alpha-D-ribose 1-phosphate</text>
        <dbReference type="Rhea" id="RHEA:19805"/>
        <dbReference type="ChEBI" id="CHEBI:26386"/>
        <dbReference type="ChEBI" id="CHEBI:43474"/>
        <dbReference type="ChEBI" id="CHEBI:57720"/>
        <dbReference type="ChEBI" id="CHEBI:142355"/>
        <dbReference type="EC" id="2.4.2.1"/>
    </reaction>
</comment>
<comment type="catalytic activity">
    <reaction evidence="1">
        <text>adenosine + phosphate = alpha-D-ribose 1-phosphate + adenine</text>
        <dbReference type="Rhea" id="RHEA:27642"/>
        <dbReference type="ChEBI" id="CHEBI:16335"/>
        <dbReference type="ChEBI" id="CHEBI:16708"/>
        <dbReference type="ChEBI" id="CHEBI:43474"/>
        <dbReference type="ChEBI" id="CHEBI:57720"/>
        <dbReference type="EC" id="2.4.2.1"/>
    </reaction>
</comment>
<comment type="catalytic activity">
    <reaction evidence="1">
        <text>cytidine + phosphate = cytosine + alpha-D-ribose 1-phosphate</text>
        <dbReference type="Rhea" id="RHEA:52540"/>
        <dbReference type="ChEBI" id="CHEBI:16040"/>
        <dbReference type="ChEBI" id="CHEBI:17562"/>
        <dbReference type="ChEBI" id="CHEBI:43474"/>
        <dbReference type="ChEBI" id="CHEBI:57720"/>
        <dbReference type="EC" id="2.4.2.2"/>
    </reaction>
</comment>
<comment type="catalytic activity">
    <reaction evidence="1">
        <text>guanosine + phosphate = alpha-D-ribose 1-phosphate + guanine</text>
        <dbReference type="Rhea" id="RHEA:13233"/>
        <dbReference type="ChEBI" id="CHEBI:16235"/>
        <dbReference type="ChEBI" id="CHEBI:16750"/>
        <dbReference type="ChEBI" id="CHEBI:43474"/>
        <dbReference type="ChEBI" id="CHEBI:57720"/>
        <dbReference type="EC" id="2.4.2.1"/>
    </reaction>
</comment>
<comment type="catalytic activity">
    <reaction evidence="1">
        <text>inosine + phosphate = alpha-D-ribose 1-phosphate + hypoxanthine</text>
        <dbReference type="Rhea" id="RHEA:27646"/>
        <dbReference type="ChEBI" id="CHEBI:17368"/>
        <dbReference type="ChEBI" id="CHEBI:17596"/>
        <dbReference type="ChEBI" id="CHEBI:43474"/>
        <dbReference type="ChEBI" id="CHEBI:57720"/>
        <dbReference type="EC" id="2.4.2.1"/>
    </reaction>
</comment>
<comment type="catalytic activity">
    <reaction evidence="1">
        <text>thymidine + phosphate = 2-deoxy-alpha-D-ribose 1-phosphate + thymine</text>
        <dbReference type="Rhea" id="RHEA:16037"/>
        <dbReference type="ChEBI" id="CHEBI:17748"/>
        <dbReference type="ChEBI" id="CHEBI:17821"/>
        <dbReference type="ChEBI" id="CHEBI:43474"/>
        <dbReference type="ChEBI" id="CHEBI:57259"/>
        <dbReference type="EC" id="2.4.2.2"/>
    </reaction>
</comment>
<comment type="catalytic activity">
    <reaction evidence="1">
        <text>uridine + phosphate = alpha-D-ribose 1-phosphate + uracil</text>
        <dbReference type="Rhea" id="RHEA:24388"/>
        <dbReference type="ChEBI" id="CHEBI:16704"/>
        <dbReference type="ChEBI" id="CHEBI:17568"/>
        <dbReference type="ChEBI" id="CHEBI:43474"/>
        <dbReference type="ChEBI" id="CHEBI:57720"/>
        <dbReference type="EC" id="2.4.2.2"/>
    </reaction>
</comment>
<comment type="catalytic activity">
    <reaction evidence="1">
        <text>xanthosine + phosphate = alpha-D-ribose 1-phosphate + xanthine</text>
        <dbReference type="Rhea" id="RHEA:27638"/>
        <dbReference type="ChEBI" id="CHEBI:17712"/>
        <dbReference type="ChEBI" id="CHEBI:18107"/>
        <dbReference type="ChEBI" id="CHEBI:43474"/>
        <dbReference type="ChEBI" id="CHEBI:57720"/>
        <dbReference type="EC" id="2.4.2.1"/>
    </reaction>
</comment>
<comment type="similarity">
    <text evidence="1">Belongs to the nucleoside phosphorylase PpnP family.</text>
</comment>
<gene>
    <name evidence="1" type="primary">ppnP</name>
    <name type="ordered locus">YPTB0912</name>
</gene>
<protein>
    <recommendedName>
        <fullName evidence="1">Pyrimidine/purine nucleoside phosphorylase</fullName>
        <ecNumber evidence="1">2.4.2.1</ecNumber>
        <ecNumber evidence="1">2.4.2.2</ecNumber>
    </recommendedName>
    <alternativeName>
        <fullName evidence="1">Adenosine phosphorylase</fullName>
    </alternativeName>
    <alternativeName>
        <fullName evidence="1">Cytidine phosphorylase</fullName>
    </alternativeName>
    <alternativeName>
        <fullName evidence="1">Guanosine phosphorylase</fullName>
    </alternativeName>
    <alternativeName>
        <fullName evidence="1">Inosine phosphorylase</fullName>
    </alternativeName>
    <alternativeName>
        <fullName evidence="1">Thymidine phosphorylase</fullName>
    </alternativeName>
    <alternativeName>
        <fullName evidence="1">Uridine phosphorylase</fullName>
    </alternativeName>
    <alternativeName>
        <fullName evidence="1">Xanthosine phosphorylase</fullName>
    </alternativeName>
</protein>
<name>PPNP_YERPS</name>
<evidence type="ECO:0000255" key="1">
    <source>
        <dbReference type="HAMAP-Rule" id="MF_01537"/>
    </source>
</evidence>
<organism>
    <name type="scientific">Yersinia pseudotuberculosis serotype I (strain IP32953)</name>
    <dbReference type="NCBI Taxonomy" id="273123"/>
    <lineage>
        <taxon>Bacteria</taxon>
        <taxon>Pseudomonadati</taxon>
        <taxon>Pseudomonadota</taxon>
        <taxon>Gammaproteobacteria</taxon>
        <taxon>Enterobacterales</taxon>
        <taxon>Yersiniaceae</taxon>
        <taxon>Yersinia</taxon>
    </lineage>
</organism>
<feature type="chain" id="PRO_0000211791" description="Pyrimidine/purine nucleoside phosphorylase">
    <location>
        <begin position="1"/>
        <end position="95"/>
    </location>
</feature>
<sequence>MLKFNEYFTGKVKSIGFDSDSIGPASVGVMEKGEYTFSTAKAEEMTVITGSLKVLIPGSPDWQTFMPGETFYIPGESEFNLQVAEASSYLCKYLS</sequence>
<accession>Q66DY1</accession>
<reference key="1">
    <citation type="journal article" date="2004" name="Proc. Natl. Acad. Sci. U.S.A.">
        <title>Insights into the evolution of Yersinia pestis through whole-genome comparison with Yersinia pseudotuberculosis.</title>
        <authorList>
            <person name="Chain P.S.G."/>
            <person name="Carniel E."/>
            <person name="Larimer F.W."/>
            <person name="Lamerdin J."/>
            <person name="Stoutland P.O."/>
            <person name="Regala W.M."/>
            <person name="Georgescu A.M."/>
            <person name="Vergez L.M."/>
            <person name="Land M.L."/>
            <person name="Motin V.L."/>
            <person name="Brubaker R.R."/>
            <person name="Fowler J."/>
            <person name="Hinnebusch J."/>
            <person name="Marceau M."/>
            <person name="Medigue C."/>
            <person name="Simonet M."/>
            <person name="Chenal-Francisque V."/>
            <person name="Souza B."/>
            <person name="Dacheux D."/>
            <person name="Elliott J.M."/>
            <person name="Derbise A."/>
            <person name="Hauser L.J."/>
            <person name="Garcia E."/>
        </authorList>
    </citation>
    <scope>NUCLEOTIDE SEQUENCE [LARGE SCALE GENOMIC DNA]</scope>
    <source>
        <strain>IP32953</strain>
    </source>
</reference>
<dbReference type="EC" id="2.4.2.1" evidence="1"/>
<dbReference type="EC" id="2.4.2.2" evidence="1"/>
<dbReference type="EMBL" id="BX936398">
    <property type="protein sequence ID" value="CAH20152.1"/>
    <property type="molecule type" value="Genomic_DNA"/>
</dbReference>
<dbReference type="RefSeq" id="WP_002208692.1">
    <property type="nucleotide sequence ID" value="NZ_CP009712.1"/>
</dbReference>
<dbReference type="SMR" id="Q66DY1"/>
<dbReference type="GeneID" id="57975503"/>
<dbReference type="KEGG" id="ypo:BZ17_1635"/>
<dbReference type="KEGG" id="yps:YPTB0912"/>
<dbReference type="PATRIC" id="fig|273123.14.peg.1735"/>
<dbReference type="Proteomes" id="UP000001011">
    <property type="component" value="Chromosome"/>
</dbReference>
<dbReference type="GO" id="GO:0005829">
    <property type="term" value="C:cytosol"/>
    <property type="evidence" value="ECO:0007669"/>
    <property type="project" value="TreeGrafter"/>
</dbReference>
<dbReference type="GO" id="GO:0047975">
    <property type="term" value="F:guanosine phosphorylase activity"/>
    <property type="evidence" value="ECO:0007669"/>
    <property type="project" value="UniProtKB-EC"/>
</dbReference>
<dbReference type="GO" id="GO:0004731">
    <property type="term" value="F:purine-nucleoside phosphorylase activity"/>
    <property type="evidence" value="ECO:0007669"/>
    <property type="project" value="UniProtKB-UniRule"/>
</dbReference>
<dbReference type="GO" id="GO:0009032">
    <property type="term" value="F:thymidine phosphorylase activity"/>
    <property type="evidence" value="ECO:0007669"/>
    <property type="project" value="UniProtKB-EC"/>
</dbReference>
<dbReference type="GO" id="GO:0004850">
    <property type="term" value="F:uridine phosphorylase activity"/>
    <property type="evidence" value="ECO:0007669"/>
    <property type="project" value="UniProtKB-EC"/>
</dbReference>
<dbReference type="FunFam" id="2.60.120.10:FF:000016">
    <property type="entry name" value="Pyrimidine/purine nucleoside phosphorylase"/>
    <property type="match status" value="1"/>
</dbReference>
<dbReference type="Gene3D" id="2.60.120.10">
    <property type="entry name" value="Jelly Rolls"/>
    <property type="match status" value="1"/>
</dbReference>
<dbReference type="HAMAP" id="MF_01537">
    <property type="entry name" value="Nucleos_phosphorylase_PpnP"/>
    <property type="match status" value="1"/>
</dbReference>
<dbReference type="InterPro" id="IPR009664">
    <property type="entry name" value="Ppnp"/>
</dbReference>
<dbReference type="InterPro" id="IPR014710">
    <property type="entry name" value="RmlC-like_jellyroll"/>
</dbReference>
<dbReference type="InterPro" id="IPR011051">
    <property type="entry name" value="RmlC_Cupin_sf"/>
</dbReference>
<dbReference type="NCBIfam" id="NF007875">
    <property type="entry name" value="PRK10579.1"/>
    <property type="match status" value="1"/>
</dbReference>
<dbReference type="PANTHER" id="PTHR36540">
    <property type="entry name" value="PYRIMIDINE/PURINE NUCLEOSIDE PHOSPHORYLASE"/>
    <property type="match status" value="1"/>
</dbReference>
<dbReference type="PANTHER" id="PTHR36540:SF1">
    <property type="entry name" value="PYRIMIDINE_PURINE NUCLEOSIDE PHOSPHORYLASE"/>
    <property type="match status" value="1"/>
</dbReference>
<dbReference type="Pfam" id="PF06865">
    <property type="entry name" value="Ppnp"/>
    <property type="match status" value="1"/>
</dbReference>
<dbReference type="SUPFAM" id="SSF51182">
    <property type="entry name" value="RmlC-like cupins"/>
    <property type="match status" value="1"/>
</dbReference>
<keyword id="KW-0328">Glycosyltransferase</keyword>
<keyword id="KW-0808">Transferase</keyword>